<organism>
    <name type="scientific">Brassica napus</name>
    <name type="common">Rape</name>
    <dbReference type="NCBI Taxonomy" id="3708"/>
    <lineage>
        <taxon>Eukaryota</taxon>
        <taxon>Viridiplantae</taxon>
        <taxon>Streptophyta</taxon>
        <taxon>Embryophyta</taxon>
        <taxon>Tracheophyta</taxon>
        <taxon>Spermatophyta</taxon>
        <taxon>Magnoliopsida</taxon>
        <taxon>eudicotyledons</taxon>
        <taxon>Gunneridae</taxon>
        <taxon>Pentapetalae</taxon>
        <taxon>rosids</taxon>
        <taxon>malvids</taxon>
        <taxon>Brassicales</taxon>
        <taxon>Brassicaceae</taxon>
        <taxon>Brassiceae</taxon>
        <taxon>Brassica</taxon>
    </lineage>
</organism>
<feature type="transit peptide" description="Chloroplast" evidence="1">
    <location>
        <begin position="1"/>
        <end position="69"/>
    </location>
</feature>
<feature type="chain" id="PRO_0000035658" description="Acetolactate synthase 3, chloroplastic">
    <location>
        <begin position="70"/>
        <end position="652"/>
    </location>
</feature>
<feature type="region of interest" description="Disordered" evidence="2">
    <location>
        <begin position="1"/>
        <end position="23"/>
    </location>
</feature>
<feature type="region of interest" description="Thiamine pyrophosphate binding">
    <location>
        <begin position="469"/>
        <end position="549"/>
    </location>
</feature>
<feature type="compositionally biased region" description="Polar residues" evidence="2">
    <location>
        <begin position="1"/>
        <end position="20"/>
    </location>
</feature>
<feature type="binding site" evidence="1">
    <location>
        <position position="126"/>
    </location>
    <ligand>
        <name>thiamine diphosphate</name>
        <dbReference type="ChEBI" id="CHEBI:58937"/>
    </ligand>
</feature>
<feature type="binding site" evidence="1">
    <location>
        <position position="228"/>
    </location>
    <ligand>
        <name>FAD</name>
        <dbReference type="ChEBI" id="CHEBI:57692"/>
    </ligand>
</feature>
<feature type="binding site" evidence="1">
    <location>
        <begin position="334"/>
        <end position="355"/>
    </location>
    <ligand>
        <name>FAD</name>
        <dbReference type="ChEBI" id="CHEBI:57692"/>
    </ligand>
</feature>
<feature type="binding site" evidence="1">
    <location>
        <begin position="377"/>
        <end position="396"/>
    </location>
    <ligand>
        <name>FAD</name>
        <dbReference type="ChEBI" id="CHEBI:57692"/>
    </ligand>
</feature>
<feature type="binding site" evidence="1">
    <location>
        <position position="520"/>
    </location>
    <ligand>
        <name>Mg(2+)</name>
        <dbReference type="ChEBI" id="CHEBI:18420"/>
    </ligand>
</feature>
<feature type="binding site" evidence="1">
    <location>
        <position position="547"/>
    </location>
    <ligand>
        <name>Mg(2+)</name>
        <dbReference type="ChEBI" id="CHEBI:18420"/>
    </ligand>
</feature>
<protein>
    <recommendedName>
        <fullName>Acetolactate synthase 3, chloroplastic</fullName>
        <ecNumber>2.2.1.6</ecNumber>
    </recommendedName>
    <alternativeName>
        <fullName>ALS III</fullName>
    </alternativeName>
    <alternativeName>
        <fullName>Acetohydroxy-acid synthase III</fullName>
    </alternativeName>
    <alternativeName>
        <fullName>Acetolactate synthase III</fullName>
    </alternativeName>
</protein>
<name>ILVB3_BRANA</name>
<accession>P27819</accession>
<reference key="1">
    <citation type="journal article" date="1991" name="Mol. Gen. Genet.">
        <title>Molecular characterization and genetic origin of the Brassica napus acetohydroxyacid synthase multigene family.</title>
        <authorList>
            <person name="Rutledge R.G."/>
            <person name="Ouellet T."/>
            <person name="Hattori J."/>
            <person name="Miki B.L.A."/>
        </authorList>
    </citation>
    <scope>NUCLEOTIDE SEQUENCE [GENOMIC DNA]</scope>
    <source>
        <strain>cv. Topas</strain>
    </source>
</reference>
<reference key="2">
    <citation type="submission" date="1992-02" db="EMBL/GenBank/DDBJ databases">
        <authorList>
            <person name="Miki B.L."/>
        </authorList>
    </citation>
    <scope>SEQUENCE REVISION</scope>
</reference>
<proteinExistence type="inferred from homology"/>
<keyword id="KW-0028">Amino-acid biosynthesis</keyword>
<keyword id="KW-0100">Branched-chain amino acid biosynthesis</keyword>
<keyword id="KW-0150">Chloroplast</keyword>
<keyword id="KW-0274">FAD</keyword>
<keyword id="KW-0285">Flavoprotein</keyword>
<keyword id="KW-0359">Herbicide resistance</keyword>
<keyword id="KW-0460">Magnesium</keyword>
<keyword id="KW-0479">Metal-binding</keyword>
<keyword id="KW-0934">Plastid</keyword>
<keyword id="KW-0786">Thiamine pyrophosphate</keyword>
<keyword id="KW-0808">Transferase</keyword>
<keyword id="KW-0809">Transit peptide</keyword>
<dbReference type="EC" id="2.2.1.6"/>
<dbReference type="EMBL" id="Z11526">
    <property type="protein sequence ID" value="CAA77615.1"/>
    <property type="molecule type" value="Genomic_DNA"/>
</dbReference>
<dbReference type="PIR" id="S29838">
    <property type="entry name" value="S29838"/>
</dbReference>
<dbReference type="SMR" id="P27819"/>
<dbReference type="UniPathway" id="UPA00047">
    <property type="reaction ID" value="UER00055"/>
</dbReference>
<dbReference type="UniPathway" id="UPA00049">
    <property type="reaction ID" value="UER00059"/>
</dbReference>
<dbReference type="GO" id="GO:0009507">
    <property type="term" value="C:chloroplast"/>
    <property type="evidence" value="ECO:0007669"/>
    <property type="project" value="UniProtKB-SubCell"/>
</dbReference>
<dbReference type="GO" id="GO:0003984">
    <property type="term" value="F:acetolactate synthase activity"/>
    <property type="evidence" value="ECO:0007669"/>
    <property type="project" value="UniProtKB-EC"/>
</dbReference>
<dbReference type="GO" id="GO:0050660">
    <property type="term" value="F:flavin adenine dinucleotide binding"/>
    <property type="evidence" value="ECO:0007669"/>
    <property type="project" value="InterPro"/>
</dbReference>
<dbReference type="GO" id="GO:0000287">
    <property type="term" value="F:magnesium ion binding"/>
    <property type="evidence" value="ECO:0007669"/>
    <property type="project" value="InterPro"/>
</dbReference>
<dbReference type="GO" id="GO:0030976">
    <property type="term" value="F:thiamine pyrophosphate binding"/>
    <property type="evidence" value="ECO:0007669"/>
    <property type="project" value="InterPro"/>
</dbReference>
<dbReference type="GO" id="GO:0009097">
    <property type="term" value="P:isoleucine biosynthetic process"/>
    <property type="evidence" value="ECO:0007669"/>
    <property type="project" value="UniProtKB-UniPathway"/>
</dbReference>
<dbReference type="GO" id="GO:0009099">
    <property type="term" value="P:L-valine biosynthetic process"/>
    <property type="evidence" value="ECO:0007669"/>
    <property type="project" value="UniProtKB-UniPathway"/>
</dbReference>
<dbReference type="GO" id="GO:0009635">
    <property type="term" value="P:response to herbicide"/>
    <property type="evidence" value="ECO:0007669"/>
    <property type="project" value="UniProtKB-KW"/>
</dbReference>
<dbReference type="CDD" id="cd02015">
    <property type="entry name" value="TPP_AHAS"/>
    <property type="match status" value="1"/>
</dbReference>
<dbReference type="CDD" id="cd07035">
    <property type="entry name" value="TPP_PYR_POX_like"/>
    <property type="match status" value="1"/>
</dbReference>
<dbReference type="FunFam" id="3.40.50.1220:FF:000008">
    <property type="entry name" value="Acetolactate synthase"/>
    <property type="match status" value="1"/>
</dbReference>
<dbReference type="FunFam" id="3.40.50.970:FF:000007">
    <property type="entry name" value="Acetolactate synthase"/>
    <property type="match status" value="1"/>
</dbReference>
<dbReference type="FunFam" id="3.40.50.970:FF:000053">
    <property type="entry name" value="Acetolactate synthase, mitochondrial"/>
    <property type="match status" value="1"/>
</dbReference>
<dbReference type="Gene3D" id="3.40.50.970">
    <property type="match status" value="2"/>
</dbReference>
<dbReference type="Gene3D" id="3.40.50.1220">
    <property type="entry name" value="TPP-binding domain"/>
    <property type="match status" value="1"/>
</dbReference>
<dbReference type="InterPro" id="IPR012846">
    <property type="entry name" value="Acetolactate_synth_lsu"/>
</dbReference>
<dbReference type="InterPro" id="IPR039368">
    <property type="entry name" value="AHAS_TPP"/>
</dbReference>
<dbReference type="InterPro" id="IPR029035">
    <property type="entry name" value="DHS-like_NAD/FAD-binding_dom"/>
</dbReference>
<dbReference type="InterPro" id="IPR029061">
    <property type="entry name" value="THDP-binding"/>
</dbReference>
<dbReference type="InterPro" id="IPR012000">
    <property type="entry name" value="Thiamin_PyroP_enz_cen_dom"/>
</dbReference>
<dbReference type="InterPro" id="IPR012001">
    <property type="entry name" value="Thiamin_PyroP_enz_TPP-bd_dom"/>
</dbReference>
<dbReference type="InterPro" id="IPR000399">
    <property type="entry name" value="TPP-bd_CS"/>
</dbReference>
<dbReference type="InterPro" id="IPR045229">
    <property type="entry name" value="TPP_enz"/>
</dbReference>
<dbReference type="InterPro" id="IPR011766">
    <property type="entry name" value="TPP_enzyme_TPP-bd"/>
</dbReference>
<dbReference type="NCBIfam" id="TIGR00118">
    <property type="entry name" value="acolac_lg"/>
    <property type="match status" value="1"/>
</dbReference>
<dbReference type="PANTHER" id="PTHR18968:SF13">
    <property type="entry name" value="ACETOLACTATE SYNTHASE CATALYTIC SUBUNIT, MITOCHONDRIAL"/>
    <property type="match status" value="1"/>
</dbReference>
<dbReference type="PANTHER" id="PTHR18968">
    <property type="entry name" value="THIAMINE PYROPHOSPHATE ENZYMES"/>
    <property type="match status" value="1"/>
</dbReference>
<dbReference type="Pfam" id="PF02775">
    <property type="entry name" value="TPP_enzyme_C"/>
    <property type="match status" value="1"/>
</dbReference>
<dbReference type="Pfam" id="PF00205">
    <property type="entry name" value="TPP_enzyme_M"/>
    <property type="match status" value="1"/>
</dbReference>
<dbReference type="Pfam" id="PF02776">
    <property type="entry name" value="TPP_enzyme_N"/>
    <property type="match status" value="1"/>
</dbReference>
<dbReference type="SUPFAM" id="SSF52467">
    <property type="entry name" value="DHS-like NAD/FAD-binding domain"/>
    <property type="match status" value="1"/>
</dbReference>
<dbReference type="SUPFAM" id="SSF52518">
    <property type="entry name" value="Thiamin diphosphate-binding fold (THDP-binding)"/>
    <property type="match status" value="2"/>
</dbReference>
<dbReference type="PROSITE" id="PS00187">
    <property type="entry name" value="TPP_ENZYMES"/>
    <property type="match status" value="1"/>
</dbReference>
<comment type="catalytic activity">
    <reaction>
        <text>2 pyruvate + H(+) = (2S)-2-acetolactate + CO2</text>
        <dbReference type="Rhea" id="RHEA:25249"/>
        <dbReference type="ChEBI" id="CHEBI:15361"/>
        <dbReference type="ChEBI" id="CHEBI:15378"/>
        <dbReference type="ChEBI" id="CHEBI:16526"/>
        <dbReference type="ChEBI" id="CHEBI:58476"/>
        <dbReference type="EC" id="2.2.1.6"/>
    </reaction>
</comment>
<comment type="cofactor">
    <cofactor evidence="1">
        <name>Mg(2+)</name>
        <dbReference type="ChEBI" id="CHEBI:18420"/>
    </cofactor>
    <text evidence="1">Binds 1 Mg(2+) ion per subunit.</text>
</comment>
<comment type="cofactor">
    <cofactor evidence="1">
        <name>thiamine diphosphate</name>
        <dbReference type="ChEBI" id="CHEBI:58937"/>
    </cofactor>
    <text evidence="1">Binds 1 thiamine pyrophosphate per subunit.</text>
</comment>
<comment type="pathway">
    <text>Amino-acid biosynthesis; L-isoleucine biosynthesis; L-isoleucine from 2-oxobutanoate: step 1/4.</text>
</comment>
<comment type="pathway">
    <text>Amino-acid biosynthesis; L-valine biosynthesis; L-valine from pyruvate: step 1/4.</text>
</comment>
<comment type="subcellular location">
    <subcellularLocation>
        <location>Plastid</location>
        <location>Chloroplast</location>
    </subcellularLocation>
</comment>
<comment type="miscellaneous">
    <text>Acetolactate synthase is the target enzyme for sulfonylurea and imidazolinone herbicides.</text>
</comment>
<comment type="similarity">
    <text evidence="3">Belongs to the TPP enzyme family.</text>
</comment>
<sequence>MAAATSSSPISLTAKPSSKSPLPISRFSLPFSLTPQKPSSRLHRPLAISAVLNSPVNVAPEKTDKIKTFISRYAPDEPRKGADILVEALERQGVETVFAYPGGASMEIHQALTRSSTIRNVLPRHEQGGVFAAEGYARSSGKPGICIATSGPGATNLVSGLADAMLDSVPLVAITGQVPRRMIGTDAFQETPIVEVTRSITKHNYLVMDVDDIPRIVQEAFFLATSGRPGPVLVDVPKDIQQQLAIPNWDQPMRLPGYMSRLPQPPEVSQLGQIVRLISESKRPVLYVGGGSLNSSEELGRFVELTGIPVASTLMGLGSYPCNDELSLQMLGMHGTVYANYAVEHSDLLLAFGVRFDDRVTGKLEAFASRAKIVHIDIDSAEIGKNKTPHVSVCGDVKLALQGMNKVLENRAEELKLDFGVWRSELSEQKQKFPLSFKTFGEAIPPQYAIQVLDELTQGKAIISTGVGQHQMWAAQFYKYRKPRQWLSSSGLGAMGFGLPAAIGASVANPDAIVVDIDGDGSFIMNVQELATIRVENLPVKILLLNNQHLGMVMQWEDRFYKANRAHTYLGDPARENEIFPNMLQFAGACGIPAARVTKKEELREAIQTMLDTPGPYLLDVICPHQEHVLPMIPSGGTFKDVITEGDGRTKY</sequence>
<evidence type="ECO:0000250" key="1"/>
<evidence type="ECO:0000256" key="2">
    <source>
        <dbReference type="SAM" id="MobiDB-lite"/>
    </source>
</evidence>
<evidence type="ECO:0000305" key="3"/>